<reference key="1">
    <citation type="journal article" date="2001" name="Nature">
        <title>Genome sequence of enterohaemorrhagic Escherichia coli O157:H7.</title>
        <authorList>
            <person name="Perna N.T."/>
            <person name="Plunkett G. III"/>
            <person name="Burland V."/>
            <person name="Mau B."/>
            <person name="Glasner J.D."/>
            <person name="Rose D.J."/>
            <person name="Mayhew G.F."/>
            <person name="Evans P.S."/>
            <person name="Gregor J."/>
            <person name="Kirkpatrick H.A."/>
            <person name="Posfai G."/>
            <person name="Hackett J."/>
            <person name="Klink S."/>
            <person name="Boutin A."/>
            <person name="Shao Y."/>
            <person name="Miller L."/>
            <person name="Grotbeck E.J."/>
            <person name="Davis N.W."/>
            <person name="Lim A."/>
            <person name="Dimalanta E.T."/>
            <person name="Potamousis K."/>
            <person name="Apodaca J."/>
            <person name="Anantharaman T.S."/>
            <person name="Lin J."/>
            <person name="Yen G."/>
            <person name="Schwartz D.C."/>
            <person name="Welch R.A."/>
            <person name="Blattner F.R."/>
        </authorList>
    </citation>
    <scope>NUCLEOTIDE SEQUENCE [LARGE SCALE GENOMIC DNA]</scope>
    <source>
        <strain>O157:H7 / EDL933 / ATCC 700927 / EHEC</strain>
    </source>
</reference>
<reference key="2">
    <citation type="journal article" date="2001" name="DNA Res.">
        <title>Complete genome sequence of enterohemorrhagic Escherichia coli O157:H7 and genomic comparison with a laboratory strain K-12.</title>
        <authorList>
            <person name="Hayashi T."/>
            <person name="Makino K."/>
            <person name="Ohnishi M."/>
            <person name="Kurokawa K."/>
            <person name="Ishii K."/>
            <person name="Yokoyama K."/>
            <person name="Han C.-G."/>
            <person name="Ohtsubo E."/>
            <person name="Nakayama K."/>
            <person name="Murata T."/>
            <person name="Tanaka M."/>
            <person name="Tobe T."/>
            <person name="Iida T."/>
            <person name="Takami H."/>
            <person name="Honda T."/>
            <person name="Sasakawa C."/>
            <person name="Ogasawara N."/>
            <person name="Yasunaga T."/>
            <person name="Kuhara S."/>
            <person name="Shiba T."/>
            <person name="Hattori M."/>
            <person name="Shinagawa H."/>
        </authorList>
    </citation>
    <scope>NUCLEOTIDE SEQUENCE [LARGE SCALE GENOMIC DNA]</scope>
    <source>
        <strain>O157:H7 / Sakai / RIMD 0509952 / EHEC</strain>
    </source>
</reference>
<evidence type="ECO:0000250" key="1"/>
<evidence type="ECO:0000305" key="2"/>
<protein>
    <recommendedName>
        <fullName>Glyoxylate/hydroxypyruvate reductase B</fullName>
        <ecNumber>1.1.1.79</ecNumber>
        <ecNumber>1.1.1.81</ecNumber>
    </recommendedName>
</protein>
<feature type="chain" id="PRO_0000076030" description="Glyoxylate/hydroxypyruvate reductase B">
    <location>
        <begin position="1"/>
        <end position="324"/>
    </location>
</feature>
<feature type="active site" evidence="1">
    <location>
        <position position="237"/>
    </location>
</feature>
<feature type="active site" evidence="1">
    <location>
        <position position="266"/>
    </location>
</feature>
<feature type="active site" description="Proton donor" evidence="1">
    <location>
        <position position="285"/>
    </location>
</feature>
<proteinExistence type="inferred from homology"/>
<organism>
    <name type="scientific">Escherichia coli O157:H7</name>
    <dbReference type="NCBI Taxonomy" id="83334"/>
    <lineage>
        <taxon>Bacteria</taxon>
        <taxon>Pseudomonadati</taxon>
        <taxon>Pseudomonadota</taxon>
        <taxon>Gammaproteobacteria</taxon>
        <taxon>Enterobacterales</taxon>
        <taxon>Enterobacteriaceae</taxon>
        <taxon>Escherichia</taxon>
    </lineage>
</organism>
<dbReference type="EC" id="1.1.1.79"/>
<dbReference type="EC" id="1.1.1.81"/>
<dbReference type="EMBL" id="AE005174">
    <property type="protein sequence ID" value="AAG58702.1"/>
    <property type="status" value="ALT_INIT"/>
    <property type="molecule type" value="Genomic_DNA"/>
</dbReference>
<dbReference type="EMBL" id="BA000007">
    <property type="protein sequence ID" value="BAB37861.2"/>
    <property type="molecule type" value="Genomic_DNA"/>
</dbReference>
<dbReference type="PIR" id="B86030">
    <property type="entry name" value="B86030"/>
</dbReference>
<dbReference type="PIR" id="F91183">
    <property type="entry name" value="F91183"/>
</dbReference>
<dbReference type="SMR" id="P58220"/>
<dbReference type="STRING" id="155864.Z4978"/>
<dbReference type="KEGG" id="ece:Z4978"/>
<dbReference type="KEGG" id="ecs:ECs_4438"/>
<dbReference type="PATRIC" id="fig|386585.9.peg.4645"/>
<dbReference type="eggNOG" id="COG1052">
    <property type="taxonomic scope" value="Bacteria"/>
</dbReference>
<dbReference type="HOGENOM" id="CLU_019796_1_2_6"/>
<dbReference type="OMA" id="PHIAWAY"/>
<dbReference type="Proteomes" id="UP000000558">
    <property type="component" value="Chromosome"/>
</dbReference>
<dbReference type="Proteomes" id="UP000002519">
    <property type="component" value="Chromosome"/>
</dbReference>
<dbReference type="GO" id="GO:0005829">
    <property type="term" value="C:cytosol"/>
    <property type="evidence" value="ECO:0007669"/>
    <property type="project" value="UniProtKB-ARBA"/>
</dbReference>
<dbReference type="GO" id="GO:0005886">
    <property type="term" value="C:plasma membrane"/>
    <property type="evidence" value="ECO:0007669"/>
    <property type="project" value="UniProtKB-UniRule"/>
</dbReference>
<dbReference type="GO" id="GO:0030267">
    <property type="term" value="F:glyoxylate reductase (NADPH) activity"/>
    <property type="evidence" value="ECO:0007669"/>
    <property type="project" value="UniProtKB-UniRule"/>
</dbReference>
<dbReference type="GO" id="GO:0008465">
    <property type="term" value="F:hydroxypyruvate reductase (NADH) activity"/>
    <property type="evidence" value="ECO:0007669"/>
    <property type="project" value="RHEA"/>
</dbReference>
<dbReference type="GO" id="GO:0120509">
    <property type="term" value="F:hydroxypyruvate reductase (NADPH) activity"/>
    <property type="evidence" value="ECO:0007669"/>
    <property type="project" value="RHEA"/>
</dbReference>
<dbReference type="GO" id="GO:0051287">
    <property type="term" value="F:NAD binding"/>
    <property type="evidence" value="ECO:0007669"/>
    <property type="project" value="InterPro"/>
</dbReference>
<dbReference type="CDD" id="cd05301">
    <property type="entry name" value="GDH"/>
    <property type="match status" value="1"/>
</dbReference>
<dbReference type="FunFam" id="3.40.50.720:FF:000026">
    <property type="entry name" value="Glyoxylate/hydroxypyruvate reductase B"/>
    <property type="match status" value="1"/>
</dbReference>
<dbReference type="Gene3D" id="3.40.50.720">
    <property type="entry name" value="NAD(P)-binding Rossmann-like Domain"/>
    <property type="match status" value="2"/>
</dbReference>
<dbReference type="HAMAP" id="MF_01667">
    <property type="entry name" value="2_Hacid_dh_C_GhrB"/>
    <property type="match status" value="1"/>
</dbReference>
<dbReference type="InterPro" id="IPR050223">
    <property type="entry name" value="D-isomer_2-hydroxyacid_DH"/>
</dbReference>
<dbReference type="InterPro" id="IPR006139">
    <property type="entry name" value="D-isomer_2_OHA_DH_cat_dom"/>
</dbReference>
<dbReference type="InterPro" id="IPR029753">
    <property type="entry name" value="D-isomer_DH_CS"/>
</dbReference>
<dbReference type="InterPro" id="IPR006140">
    <property type="entry name" value="D-isomer_DH_NAD-bd"/>
</dbReference>
<dbReference type="InterPro" id="IPR023756">
    <property type="entry name" value="Glyo/OHPyrv_Rdtase_B"/>
</dbReference>
<dbReference type="InterPro" id="IPR036291">
    <property type="entry name" value="NAD(P)-bd_dom_sf"/>
</dbReference>
<dbReference type="NCBIfam" id="NF011938">
    <property type="entry name" value="PRK15409.1"/>
    <property type="match status" value="1"/>
</dbReference>
<dbReference type="PANTHER" id="PTHR10996">
    <property type="entry name" value="2-HYDROXYACID DEHYDROGENASE-RELATED"/>
    <property type="match status" value="1"/>
</dbReference>
<dbReference type="PANTHER" id="PTHR10996:SF283">
    <property type="entry name" value="GLYOXYLATE_HYDROXYPYRUVATE REDUCTASE B"/>
    <property type="match status" value="1"/>
</dbReference>
<dbReference type="Pfam" id="PF00389">
    <property type="entry name" value="2-Hacid_dh"/>
    <property type="match status" value="1"/>
</dbReference>
<dbReference type="Pfam" id="PF02826">
    <property type="entry name" value="2-Hacid_dh_C"/>
    <property type="match status" value="1"/>
</dbReference>
<dbReference type="SUPFAM" id="SSF52283">
    <property type="entry name" value="Formate/glycerate dehydrogenase catalytic domain-like"/>
    <property type="match status" value="1"/>
</dbReference>
<dbReference type="SUPFAM" id="SSF51735">
    <property type="entry name" value="NAD(P)-binding Rossmann-fold domains"/>
    <property type="match status" value="1"/>
</dbReference>
<dbReference type="PROSITE" id="PS00670">
    <property type="entry name" value="D_2_HYDROXYACID_DH_2"/>
    <property type="match status" value="1"/>
</dbReference>
<dbReference type="PROSITE" id="PS00671">
    <property type="entry name" value="D_2_HYDROXYACID_DH_3"/>
    <property type="match status" value="1"/>
</dbReference>
<name>GHRB_ECO57</name>
<gene>
    <name type="primary">tkrA</name>
    <name type="ordered locus">Z4978</name>
    <name type="ordered locus">ECs4438</name>
</gene>
<accession>P58220</accession>
<sequence>MKPSVILYKALPDDLLQRLQEHFTVHQVANLSPQTVEQNAAIFAEAEGLLGSNENVDAALLEKMPKLRATSTISVGYDNFDVDALTARKILLMHTPTVLTETVADTLMALVLSTARRVVEVAERVKAGEWTASIGPDWYGTDVHHKTLGIVGMGRIGMALAQRAHFGFNMPILYNARRHHKEAEERFNARYCDLDTLLQESDFVCLILPLTDETHHLFGAEQFAKMKSSAIFINAGRGPVVDENALIAALQKGEIHAAGLDVFEQEPLSVDSPLLSMANVVAVPHIGSATHETRYGMAACAVDNLIDALQGKVEKNCVNPHVAD</sequence>
<comment type="function">
    <text evidence="1">Catalyzes the NADPH-dependent reduction of glyoxylate and hydroxypyruvate into glycolate and glycerate, respectively.</text>
</comment>
<comment type="catalytic activity">
    <reaction>
        <text>glycolate + NADP(+) = glyoxylate + NADPH + H(+)</text>
        <dbReference type="Rhea" id="RHEA:10992"/>
        <dbReference type="ChEBI" id="CHEBI:15378"/>
        <dbReference type="ChEBI" id="CHEBI:29805"/>
        <dbReference type="ChEBI" id="CHEBI:36655"/>
        <dbReference type="ChEBI" id="CHEBI:57783"/>
        <dbReference type="ChEBI" id="CHEBI:58349"/>
        <dbReference type="EC" id="1.1.1.79"/>
    </reaction>
</comment>
<comment type="catalytic activity">
    <reaction>
        <text>(R)-glycerate + NAD(+) = 3-hydroxypyruvate + NADH + H(+)</text>
        <dbReference type="Rhea" id="RHEA:17905"/>
        <dbReference type="ChEBI" id="CHEBI:15378"/>
        <dbReference type="ChEBI" id="CHEBI:16659"/>
        <dbReference type="ChEBI" id="CHEBI:17180"/>
        <dbReference type="ChEBI" id="CHEBI:57540"/>
        <dbReference type="ChEBI" id="CHEBI:57945"/>
        <dbReference type="EC" id="1.1.1.81"/>
    </reaction>
</comment>
<comment type="catalytic activity">
    <reaction>
        <text>(R)-glycerate + NADP(+) = 3-hydroxypyruvate + NADPH + H(+)</text>
        <dbReference type="Rhea" id="RHEA:18657"/>
        <dbReference type="ChEBI" id="CHEBI:15378"/>
        <dbReference type="ChEBI" id="CHEBI:16659"/>
        <dbReference type="ChEBI" id="CHEBI:17180"/>
        <dbReference type="ChEBI" id="CHEBI:57783"/>
        <dbReference type="ChEBI" id="CHEBI:58349"/>
        <dbReference type="EC" id="1.1.1.81"/>
    </reaction>
</comment>
<comment type="subunit">
    <text evidence="1">Homodimer.</text>
</comment>
<comment type="subcellular location">
    <subcellularLocation>
        <location evidence="1">Cytoplasm</location>
    </subcellularLocation>
</comment>
<comment type="similarity">
    <text evidence="2">Belongs to the D-isomer specific 2-hydroxyacid dehydrogenase family. GhrB subfamily.</text>
</comment>
<comment type="sequence caution" evidence="2">
    <conflict type="erroneous initiation">
        <sequence resource="EMBL-CDS" id="AAG58702"/>
    </conflict>
    <text>Extended N-terminus.</text>
</comment>
<keyword id="KW-0963">Cytoplasm</keyword>
<keyword id="KW-0520">NAD</keyword>
<keyword id="KW-0521">NADP</keyword>
<keyword id="KW-0560">Oxidoreductase</keyword>
<keyword id="KW-1185">Reference proteome</keyword>